<organism>
    <name type="scientific">Halorhodospira halophila (strain DSM 244 / SL1)</name>
    <name type="common">Ectothiorhodospira halophila (strain DSM 244 / SL1)</name>
    <dbReference type="NCBI Taxonomy" id="349124"/>
    <lineage>
        <taxon>Bacteria</taxon>
        <taxon>Pseudomonadati</taxon>
        <taxon>Pseudomonadota</taxon>
        <taxon>Gammaproteobacteria</taxon>
        <taxon>Chromatiales</taxon>
        <taxon>Ectothiorhodospiraceae</taxon>
        <taxon>Halorhodospira</taxon>
    </lineage>
</organism>
<gene>
    <name evidence="1" type="primary">mraZ</name>
    <name type="ordered locus">Hhal_2100</name>
</gene>
<reference key="1">
    <citation type="submission" date="2006-12" db="EMBL/GenBank/DDBJ databases">
        <title>Complete sequence of Halorhodospira halophila SL1.</title>
        <authorList>
            <consortium name="US DOE Joint Genome Institute"/>
            <person name="Copeland A."/>
            <person name="Lucas S."/>
            <person name="Lapidus A."/>
            <person name="Barry K."/>
            <person name="Detter J.C."/>
            <person name="Glavina del Rio T."/>
            <person name="Hammon N."/>
            <person name="Israni S."/>
            <person name="Dalin E."/>
            <person name="Tice H."/>
            <person name="Pitluck S."/>
            <person name="Saunders E."/>
            <person name="Brettin T."/>
            <person name="Bruce D."/>
            <person name="Han C."/>
            <person name="Tapia R."/>
            <person name="Schmutz J."/>
            <person name="Larimer F."/>
            <person name="Land M."/>
            <person name="Hauser L."/>
            <person name="Kyrpides N."/>
            <person name="Mikhailova N."/>
            <person name="Hoff W."/>
            <person name="Richardson P."/>
        </authorList>
    </citation>
    <scope>NUCLEOTIDE SEQUENCE [LARGE SCALE GENOMIC DNA]</scope>
    <source>
        <strain>DSM 244 / SL1</strain>
    </source>
</reference>
<comment type="subunit">
    <text evidence="1">Forms oligomers.</text>
</comment>
<comment type="subcellular location">
    <subcellularLocation>
        <location evidence="1">Cytoplasm</location>
        <location evidence="1">Nucleoid</location>
    </subcellularLocation>
</comment>
<comment type="similarity">
    <text evidence="1">Belongs to the MraZ family.</text>
</comment>
<accession>A1WYV2</accession>
<dbReference type="EMBL" id="CP000544">
    <property type="protein sequence ID" value="ABM62864.1"/>
    <property type="molecule type" value="Genomic_DNA"/>
</dbReference>
<dbReference type="RefSeq" id="WP_011814886.1">
    <property type="nucleotide sequence ID" value="NC_008789.1"/>
</dbReference>
<dbReference type="SMR" id="A1WYV2"/>
<dbReference type="STRING" id="349124.Hhal_2100"/>
<dbReference type="KEGG" id="hha:Hhal_2100"/>
<dbReference type="eggNOG" id="COG2001">
    <property type="taxonomic scope" value="Bacteria"/>
</dbReference>
<dbReference type="HOGENOM" id="CLU_107907_2_0_6"/>
<dbReference type="OrthoDB" id="9807753at2"/>
<dbReference type="Proteomes" id="UP000000647">
    <property type="component" value="Chromosome"/>
</dbReference>
<dbReference type="GO" id="GO:0005737">
    <property type="term" value="C:cytoplasm"/>
    <property type="evidence" value="ECO:0007669"/>
    <property type="project" value="UniProtKB-UniRule"/>
</dbReference>
<dbReference type="GO" id="GO:0009295">
    <property type="term" value="C:nucleoid"/>
    <property type="evidence" value="ECO:0007669"/>
    <property type="project" value="UniProtKB-SubCell"/>
</dbReference>
<dbReference type="GO" id="GO:0003700">
    <property type="term" value="F:DNA-binding transcription factor activity"/>
    <property type="evidence" value="ECO:0007669"/>
    <property type="project" value="UniProtKB-UniRule"/>
</dbReference>
<dbReference type="GO" id="GO:0000976">
    <property type="term" value="F:transcription cis-regulatory region binding"/>
    <property type="evidence" value="ECO:0007669"/>
    <property type="project" value="TreeGrafter"/>
</dbReference>
<dbReference type="GO" id="GO:2000143">
    <property type="term" value="P:negative regulation of DNA-templated transcription initiation"/>
    <property type="evidence" value="ECO:0007669"/>
    <property type="project" value="TreeGrafter"/>
</dbReference>
<dbReference type="CDD" id="cd16321">
    <property type="entry name" value="MraZ_C"/>
    <property type="match status" value="1"/>
</dbReference>
<dbReference type="CDD" id="cd16320">
    <property type="entry name" value="MraZ_N"/>
    <property type="match status" value="1"/>
</dbReference>
<dbReference type="Gene3D" id="3.40.1550.20">
    <property type="entry name" value="Transcriptional regulator MraZ domain"/>
    <property type="match status" value="1"/>
</dbReference>
<dbReference type="HAMAP" id="MF_01008">
    <property type="entry name" value="MraZ"/>
    <property type="match status" value="1"/>
</dbReference>
<dbReference type="InterPro" id="IPR003444">
    <property type="entry name" value="MraZ"/>
</dbReference>
<dbReference type="InterPro" id="IPR035644">
    <property type="entry name" value="MraZ_C"/>
</dbReference>
<dbReference type="InterPro" id="IPR020603">
    <property type="entry name" value="MraZ_dom"/>
</dbReference>
<dbReference type="InterPro" id="IPR035642">
    <property type="entry name" value="MraZ_N"/>
</dbReference>
<dbReference type="InterPro" id="IPR038619">
    <property type="entry name" value="MraZ_sf"/>
</dbReference>
<dbReference type="InterPro" id="IPR007159">
    <property type="entry name" value="SpoVT-AbrB_dom"/>
</dbReference>
<dbReference type="InterPro" id="IPR037914">
    <property type="entry name" value="SpoVT-AbrB_sf"/>
</dbReference>
<dbReference type="NCBIfam" id="TIGR00242">
    <property type="entry name" value="division/cell wall cluster transcriptional repressor MraZ"/>
    <property type="match status" value="1"/>
</dbReference>
<dbReference type="PANTHER" id="PTHR34701">
    <property type="entry name" value="TRANSCRIPTIONAL REGULATOR MRAZ"/>
    <property type="match status" value="1"/>
</dbReference>
<dbReference type="PANTHER" id="PTHR34701:SF1">
    <property type="entry name" value="TRANSCRIPTIONAL REGULATOR MRAZ"/>
    <property type="match status" value="1"/>
</dbReference>
<dbReference type="Pfam" id="PF02381">
    <property type="entry name" value="MraZ"/>
    <property type="match status" value="2"/>
</dbReference>
<dbReference type="SUPFAM" id="SSF89447">
    <property type="entry name" value="AbrB/MazE/MraZ-like"/>
    <property type="match status" value="1"/>
</dbReference>
<dbReference type="PROSITE" id="PS51740">
    <property type="entry name" value="SPOVT_ABRB"/>
    <property type="match status" value="2"/>
</dbReference>
<evidence type="ECO:0000255" key="1">
    <source>
        <dbReference type="HAMAP-Rule" id="MF_01008"/>
    </source>
</evidence>
<evidence type="ECO:0000255" key="2">
    <source>
        <dbReference type="PROSITE-ProRule" id="PRU01076"/>
    </source>
</evidence>
<proteinExistence type="inferred from homology"/>
<sequence>MFRGVNQLNLDAKGRLAFPSRHRDRLLSHCSGEVVATIDYRDRCLVFYPLPEWEEIERKLIALPDLQPSAKRLKRLLIGHAQELQVDGNGRALVPPPLREYAGLEKRVVLIGQGNKFELWDESLWEQRRADWLQEAAAADAELPGELESLAL</sequence>
<protein>
    <recommendedName>
        <fullName>Transcriptional regulator MraZ</fullName>
    </recommendedName>
</protein>
<name>MRAZ_HALHL</name>
<keyword id="KW-0963">Cytoplasm</keyword>
<keyword id="KW-0238">DNA-binding</keyword>
<keyword id="KW-1185">Reference proteome</keyword>
<keyword id="KW-0677">Repeat</keyword>
<keyword id="KW-0804">Transcription</keyword>
<keyword id="KW-0805">Transcription regulation</keyword>
<feature type="chain" id="PRO_1000062881" description="Transcriptional regulator MraZ">
    <location>
        <begin position="1"/>
        <end position="152"/>
    </location>
</feature>
<feature type="domain" description="SpoVT-AbrB 1" evidence="2">
    <location>
        <begin position="5"/>
        <end position="52"/>
    </location>
</feature>
<feature type="domain" description="SpoVT-AbrB 2" evidence="2">
    <location>
        <begin position="81"/>
        <end position="124"/>
    </location>
</feature>